<reference key="1">
    <citation type="submission" date="1994-09" db="EMBL/GenBank/DDBJ databases">
        <title>Cloning and sequencing of cervine interleukin 2.</title>
        <authorList>
            <person name="Lockhart E.A."/>
        </authorList>
    </citation>
    <scope>NUCLEOTIDE SEQUENCE [MRNA]</scope>
</reference>
<evidence type="ECO:0000250" key="1"/>
<evidence type="ECO:0000250" key="2">
    <source>
        <dbReference type="UniProtKB" id="P60568"/>
    </source>
</evidence>
<evidence type="ECO:0000255" key="3"/>
<evidence type="ECO:0000305" key="4"/>
<sequence>MYKIQLLSCIALTLALVANGAPTSSSTGNTMKEVKSLLLDLQLLLEKVKNPENLKLSKMHTFNFFMPKVNATELKHLNCLLEELKLLEDVLSLSPSKNLNPKEIKDSMDEIKDLMDNIKRIVLELQGSETSFKCEYDAATVKAVEFLNKWITFCQRIYSTMT</sequence>
<feature type="signal peptide" evidence="1">
    <location>
        <begin position="1"/>
        <end position="20"/>
    </location>
</feature>
<feature type="chain" id="PRO_0000015478" description="Interleukin-2">
    <location>
        <begin position="21"/>
        <end position="162"/>
    </location>
</feature>
<feature type="glycosylation site" description="O-linked (GalNAc...) threonine" evidence="1">
    <location>
        <position position="23"/>
    </location>
</feature>
<feature type="glycosylation site" description="N-linked (GlcNAc...) asparagine" evidence="3">
    <location>
        <position position="70"/>
    </location>
</feature>
<feature type="disulfide bond" evidence="1">
    <location>
        <begin position="79"/>
        <end position="134"/>
    </location>
</feature>
<proteinExistence type="evidence at transcript level"/>
<gene>
    <name type="primary">IL2</name>
</gene>
<accession>P51747</accession>
<organism>
    <name type="scientific">Cervus elaphus</name>
    <name type="common">Red deer</name>
    <dbReference type="NCBI Taxonomy" id="9860"/>
    <lineage>
        <taxon>Eukaryota</taxon>
        <taxon>Metazoa</taxon>
        <taxon>Chordata</taxon>
        <taxon>Craniata</taxon>
        <taxon>Vertebrata</taxon>
        <taxon>Euteleostomi</taxon>
        <taxon>Mammalia</taxon>
        <taxon>Eutheria</taxon>
        <taxon>Laurasiatheria</taxon>
        <taxon>Artiodactyla</taxon>
        <taxon>Ruminantia</taxon>
        <taxon>Pecora</taxon>
        <taxon>Cervidae</taxon>
        <taxon>Cervinae</taxon>
        <taxon>Cervus</taxon>
    </lineage>
</organism>
<keyword id="KW-1064">Adaptive immunity</keyword>
<keyword id="KW-0202">Cytokine</keyword>
<keyword id="KW-1015">Disulfide bond</keyword>
<keyword id="KW-0325">Glycoprotein</keyword>
<keyword id="KW-0339">Growth factor</keyword>
<keyword id="KW-0391">Immunity</keyword>
<keyword id="KW-0964">Secreted</keyword>
<keyword id="KW-0732">Signal</keyword>
<dbReference type="EMBL" id="U14682">
    <property type="protein sequence ID" value="AAA61733.1"/>
    <property type="molecule type" value="mRNA"/>
</dbReference>
<dbReference type="RefSeq" id="XP_043758283.1">
    <property type="nucleotide sequence ID" value="XM_043902348.1"/>
</dbReference>
<dbReference type="SMR" id="P51747"/>
<dbReference type="GlyCosmos" id="P51747">
    <property type="glycosylation" value="2 sites, No reported glycans"/>
</dbReference>
<dbReference type="GeneID" id="122694070"/>
<dbReference type="GO" id="GO:0005615">
    <property type="term" value="C:extracellular space"/>
    <property type="evidence" value="ECO:0007669"/>
    <property type="project" value="UniProtKB-KW"/>
</dbReference>
<dbReference type="GO" id="GO:0005125">
    <property type="term" value="F:cytokine activity"/>
    <property type="evidence" value="ECO:0007669"/>
    <property type="project" value="UniProtKB-KW"/>
</dbReference>
<dbReference type="GO" id="GO:0008083">
    <property type="term" value="F:growth factor activity"/>
    <property type="evidence" value="ECO:0007669"/>
    <property type="project" value="UniProtKB-KW"/>
</dbReference>
<dbReference type="GO" id="GO:0005134">
    <property type="term" value="F:interleukin-2 receptor binding"/>
    <property type="evidence" value="ECO:0007669"/>
    <property type="project" value="InterPro"/>
</dbReference>
<dbReference type="GO" id="GO:0002250">
    <property type="term" value="P:adaptive immune response"/>
    <property type="evidence" value="ECO:0007669"/>
    <property type="project" value="UniProtKB-KW"/>
</dbReference>
<dbReference type="Gene3D" id="1.20.1250.10">
    <property type="match status" value="1"/>
</dbReference>
<dbReference type="InterPro" id="IPR009079">
    <property type="entry name" value="4_helix_cytokine-like_core"/>
</dbReference>
<dbReference type="InterPro" id="IPR000779">
    <property type="entry name" value="IL-2"/>
</dbReference>
<dbReference type="InterPro" id="IPR030477">
    <property type="entry name" value="IL-2_CS"/>
</dbReference>
<dbReference type="PANTHER" id="PTHR48487">
    <property type="entry name" value="INTERLEUKIN-2"/>
    <property type="match status" value="1"/>
</dbReference>
<dbReference type="PANTHER" id="PTHR48487:SF1">
    <property type="entry name" value="INTERLEUKIN-2"/>
    <property type="match status" value="1"/>
</dbReference>
<dbReference type="Pfam" id="PF00715">
    <property type="entry name" value="IL2"/>
    <property type="match status" value="1"/>
</dbReference>
<dbReference type="PRINTS" id="PR00265">
    <property type="entry name" value="INTERLEUKIN2"/>
</dbReference>
<dbReference type="SMART" id="SM00189">
    <property type="entry name" value="IL2"/>
    <property type="match status" value="1"/>
</dbReference>
<dbReference type="SUPFAM" id="SSF47266">
    <property type="entry name" value="4-helical cytokines"/>
    <property type="match status" value="1"/>
</dbReference>
<dbReference type="PROSITE" id="PS00424">
    <property type="entry name" value="INTERLEUKIN_2"/>
    <property type="match status" value="1"/>
</dbReference>
<name>IL2_CEREL</name>
<comment type="function">
    <text evidence="2">Cytokine produced by activated CD4-positive helper T-cells and to a lesser extend activated CD8-positive T-cells and natural killer (NK) cells that plays pivotal roles in the immune response and tolerance. Binds to a receptor complex composed of either the high-affinity trimeric IL-2R (IL2RA/CD25, IL2RB/CD122 and IL2RG/CD132) or the low-affinity dimeric IL-2R (IL2RB and IL2RG). Interaction with the receptor leads to oligomerization and conformation changes in the IL-2R subunits resulting in downstream signaling starting with phosphorylation of JAK1 and JAK3. In turn, JAK1 and JAK3 phosphorylate the receptor to form a docking site leading to the phosphorylation of several substrates including STAT5. This process leads to activation of several pathways including STAT, phosphoinositide-3-kinase/PI3K and mitogen-activated protein kinase/MAPK pathways. Functions as a T-cell growth factor and can increase NK-cell cytolytic activity as well. Promotes strong proliferation of activated B-cells and subsequently immunoglobulin production. Plays a pivotal role in regulating the adaptive immune system by controlling the survival and proliferation of regulatory T-cells, which are required for the maintenance of immune tolerance. Moreover, participates in the differentiation and homeostasis of effector T-cell subsets, including Th1, Th2, Th17 as well as memory CD8-positive T-cells.</text>
</comment>
<comment type="subcellular location">
    <subcellularLocation>
        <location>Secreted</location>
    </subcellularLocation>
</comment>
<comment type="similarity">
    <text evidence="4">Belongs to the IL-2 family.</text>
</comment>
<protein>
    <recommendedName>
        <fullName>Interleukin-2</fullName>
        <shortName>IL-2</shortName>
    </recommendedName>
    <alternativeName>
        <fullName>T-cell growth factor</fullName>
        <shortName>TCGF</shortName>
    </alternativeName>
</protein>